<comment type="function">
    <text evidence="1">Provides the rickettsial cell with host ATP in exchange for rickettsial ADP. This is an obligate exchange system. This energy acquiring activity is an important component of rickettsial parasitism (By similarity).</text>
</comment>
<comment type="subcellular location">
    <subcellularLocation>
        <location>Cell membrane</location>
        <topology>Multi-pass membrane protein</topology>
    </subcellularLocation>
</comment>
<comment type="similarity">
    <text evidence="3">Belongs to the ADP/ATP translocase tlc family.</text>
</comment>
<organism>
    <name type="scientific">Rickettsia conorii (strain ATCC VR-613 / Malish 7)</name>
    <dbReference type="NCBI Taxonomy" id="272944"/>
    <lineage>
        <taxon>Bacteria</taxon>
        <taxon>Pseudomonadati</taxon>
        <taxon>Pseudomonadota</taxon>
        <taxon>Alphaproteobacteria</taxon>
        <taxon>Rickettsiales</taxon>
        <taxon>Rickettsiaceae</taxon>
        <taxon>Rickettsieae</taxon>
        <taxon>Rickettsia</taxon>
        <taxon>spotted fever group</taxon>
    </lineage>
</organism>
<feature type="chain" id="PRO_0000286470" description="ADP,ATP carrier protein 2">
    <location>
        <begin position="1"/>
        <end position="507"/>
    </location>
</feature>
<feature type="transmembrane region" description="Helical" evidence="2">
    <location>
        <begin position="31"/>
        <end position="51"/>
    </location>
</feature>
<feature type="transmembrane region" description="Helical" evidence="2">
    <location>
        <begin position="67"/>
        <end position="87"/>
    </location>
</feature>
<feature type="transmembrane region" description="Helical" evidence="2">
    <location>
        <begin position="99"/>
        <end position="119"/>
    </location>
</feature>
<feature type="transmembrane region" description="Helical" evidence="2">
    <location>
        <begin position="130"/>
        <end position="150"/>
    </location>
</feature>
<feature type="transmembrane region" description="Helical" evidence="2">
    <location>
        <begin position="154"/>
        <end position="174"/>
    </location>
</feature>
<feature type="transmembrane region" description="Helical" evidence="2">
    <location>
        <begin position="192"/>
        <end position="212"/>
    </location>
</feature>
<feature type="transmembrane region" description="Helical" evidence="2">
    <location>
        <begin position="231"/>
        <end position="251"/>
    </location>
</feature>
<feature type="transmembrane region" description="Helical" evidence="2">
    <location>
        <begin position="292"/>
        <end position="312"/>
    </location>
</feature>
<feature type="transmembrane region" description="Helical" evidence="2">
    <location>
        <begin position="333"/>
        <end position="353"/>
    </location>
</feature>
<feature type="transmembrane region" description="Helical" evidence="2">
    <location>
        <begin position="357"/>
        <end position="377"/>
    </location>
</feature>
<feature type="transmembrane region" description="Helical" evidence="2">
    <location>
        <begin position="393"/>
        <end position="413"/>
    </location>
</feature>
<feature type="transmembrane region" description="Helical" evidence="2">
    <location>
        <begin position="451"/>
        <end position="471"/>
    </location>
</feature>
<feature type="transmembrane region" description="Helical" evidence="2">
    <location>
        <begin position="474"/>
        <end position="494"/>
    </location>
</feature>
<accession>Q92I98</accession>
<reference key="1">
    <citation type="journal article" date="2001" name="Science">
        <title>Mechanisms of evolution in Rickettsia conorii and R. prowazekii.</title>
        <authorList>
            <person name="Ogata H."/>
            <person name="Audic S."/>
            <person name="Renesto-Audiffren P."/>
            <person name="Fournier P.-E."/>
            <person name="Barbe V."/>
            <person name="Samson D."/>
            <person name="Roux V."/>
            <person name="Cossart P."/>
            <person name="Weissenbach J."/>
            <person name="Claverie J.-M."/>
            <person name="Raoult D."/>
        </authorList>
    </citation>
    <scope>NUCLEOTIDE SEQUENCE [LARGE SCALE GENOMIC DNA]</scope>
    <source>
        <strain>ATCC VR-613 / Malish 7</strain>
    </source>
</reference>
<protein>
    <recommendedName>
        <fullName>ADP,ATP carrier protein 2</fullName>
    </recommendedName>
    <alternativeName>
        <fullName>ADP/ATP translocase 2</fullName>
    </alternativeName>
</protein>
<name>TLCB_RICCN</name>
<gene>
    <name type="primary">tlcB</name>
    <name type="synonym">tlc2</name>
    <name type="ordered locus">RC0522</name>
</gene>
<sequence length="507" mass="58365">MDSVDSNFTIWNKARNSKFRHIVWPIRSYELTKFIPMALLMFFILLNQNLVRSIKDSFVVTLISSEVLSFIKLWGEMPMGILFVIFYSKLCNIMTTEQVFRIITGTFLFFFAIFGFILFPYREFFHPDPELIKHYITVLPHLKWFLIIWGQWSLVLFYIMGELWPVIVFTLLYWQLANKITKVEEAPRFYSFFTLFGQTNLLISGTVIIYFAKSEHFLLPLFSHLNDTNEILLKSFITVILISGLICLALHKLIDKSVVEADKNIKFKNQRMDILKLSLVDSAKVILTSRYLGFICLLVMSYSMSISLIEGLWMSKVKQLYPATKDFIAYHGKVFFWTGILTLVSAFLGSSLIRICGWFWGAIITPIMMFGAGVMFFSFTVFENHLGNIVNTLGYSAPLVVIVFIGGLWHVLSKSVKYSLFDATKEMVYIPLDSEMKTKGKAAVDVMGAKIGKSIGAIIQFISFSIFPNAIHNDIAGLLMFSFIIVCLLWLYGVKVLSKYYNKMIQR</sequence>
<dbReference type="EMBL" id="AE006914">
    <property type="protein sequence ID" value="AAL03060.1"/>
    <property type="molecule type" value="Genomic_DNA"/>
</dbReference>
<dbReference type="PIR" id="B97765">
    <property type="entry name" value="B97765"/>
</dbReference>
<dbReference type="RefSeq" id="WP_010977161.1">
    <property type="nucleotide sequence ID" value="NC_003103.1"/>
</dbReference>
<dbReference type="GeneID" id="927640"/>
<dbReference type="KEGG" id="rco:RC0522"/>
<dbReference type="PATRIC" id="fig|272944.4.peg.597"/>
<dbReference type="HOGENOM" id="CLU_023964_0_1_5"/>
<dbReference type="Proteomes" id="UP000000816">
    <property type="component" value="Chromosome"/>
</dbReference>
<dbReference type="GO" id="GO:0005886">
    <property type="term" value="C:plasma membrane"/>
    <property type="evidence" value="ECO:0007669"/>
    <property type="project" value="UniProtKB-SubCell"/>
</dbReference>
<dbReference type="GO" id="GO:0005524">
    <property type="term" value="F:ATP binding"/>
    <property type="evidence" value="ECO:0007669"/>
    <property type="project" value="UniProtKB-KW"/>
</dbReference>
<dbReference type="GO" id="GO:0005471">
    <property type="term" value="F:ATP:ADP antiporter activity"/>
    <property type="evidence" value="ECO:0007669"/>
    <property type="project" value="InterPro"/>
</dbReference>
<dbReference type="InterPro" id="IPR004667">
    <property type="entry name" value="ADP_ATP_car_bac_type"/>
</dbReference>
<dbReference type="NCBIfam" id="TIGR00769">
    <property type="entry name" value="AAA"/>
    <property type="match status" value="1"/>
</dbReference>
<dbReference type="PANTHER" id="PTHR31187">
    <property type="match status" value="1"/>
</dbReference>
<dbReference type="PANTHER" id="PTHR31187:SF1">
    <property type="entry name" value="ADP,ATP CARRIER PROTEIN 1"/>
    <property type="match status" value="1"/>
</dbReference>
<dbReference type="Pfam" id="PF03219">
    <property type="entry name" value="TLC"/>
    <property type="match status" value="1"/>
</dbReference>
<keyword id="KW-0067">ATP-binding</keyword>
<keyword id="KW-1003">Cell membrane</keyword>
<keyword id="KW-0472">Membrane</keyword>
<keyword id="KW-0547">Nucleotide-binding</keyword>
<keyword id="KW-0812">Transmembrane</keyword>
<keyword id="KW-1133">Transmembrane helix</keyword>
<keyword id="KW-0813">Transport</keyword>
<evidence type="ECO:0000250" key="1"/>
<evidence type="ECO:0000255" key="2"/>
<evidence type="ECO:0000305" key="3"/>
<proteinExistence type="inferred from homology"/>